<gene>
    <name evidence="1" type="primary">atpG</name>
    <name type="ordered locus">WRi_012070</name>
</gene>
<dbReference type="EMBL" id="CP001391">
    <property type="protein sequence ID" value="ACN95892.1"/>
    <property type="molecule type" value="Genomic_DNA"/>
</dbReference>
<dbReference type="RefSeq" id="WP_007548693.1">
    <property type="nucleotide sequence ID" value="NZ_MKIF01000098.1"/>
</dbReference>
<dbReference type="SMR" id="C0R4Q0"/>
<dbReference type="STRING" id="66084.WRi_012070"/>
<dbReference type="KEGG" id="wri:WRi_012070"/>
<dbReference type="HOGENOM" id="CLU_050669_0_1_5"/>
<dbReference type="Proteomes" id="UP000001293">
    <property type="component" value="Chromosome"/>
</dbReference>
<dbReference type="GO" id="GO:0005886">
    <property type="term" value="C:plasma membrane"/>
    <property type="evidence" value="ECO:0007669"/>
    <property type="project" value="UniProtKB-SubCell"/>
</dbReference>
<dbReference type="GO" id="GO:0045259">
    <property type="term" value="C:proton-transporting ATP synthase complex"/>
    <property type="evidence" value="ECO:0007669"/>
    <property type="project" value="UniProtKB-KW"/>
</dbReference>
<dbReference type="GO" id="GO:0005524">
    <property type="term" value="F:ATP binding"/>
    <property type="evidence" value="ECO:0007669"/>
    <property type="project" value="UniProtKB-UniRule"/>
</dbReference>
<dbReference type="GO" id="GO:0046933">
    <property type="term" value="F:proton-transporting ATP synthase activity, rotational mechanism"/>
    <property type="evidence" value="ECO:0007669"/>
    <property type="project" value="UniProtKB-UniRule"/>
</dbReference>
<dbReference type="GO" id="GO:0042777">
    <property type="term" value="P:proton motive force-driven plasma membrane ATP synthesis"/>
    <property type="evidence" value="ECO:0007669"/>
    <property type="project" value="UniProtKB-UniRule"/>
</dbReference>
<dbReference type="CDD" id="cd12151">
    <property type="entry name" value="F1-ATPase_gamma"/>
    <property type="match status" value="1"/>
</dbReference>
<dbReference type="Gene3D" id="3.40.1380.10">
    <property type="match status" value="1"/>
</dbReference>
<dbReference type="Gene3D" id="1.10.287.80">
    <property type="entry name" value="ATP synthase, gamma subunit, helix hairpin domain"/>
    <property type="match status" value="1"/>
</dbReference>
<dbReference type="HAMAP" id="MF_00815">
    <property type="entry name" value="ATP_synth_gamma_bact"/>
    <property type="match status" value="1"/>
</dbReference>
<dbReference type="InterPro" id="IPR035968">
    <property type="entry name" value="ATP_synth_F1_ATPase_gsu"/>
</dbReference>
<dbReference type="InterPro" id="IPR000131">
    <property type="entry name" value="ATP_synth_F1_gsu"/>
</dbReference>
<dbReference type="NCBIfam" id="TIGR01146">
    <property type="entry name" value="ATPsyn_F1gamma"/>
    <property type="match status" value="1"/>
</dbReference>
<dbReference type="PANTHER" id="PTHR11693">
    <property type="entry name" value="ATP SYNTHASE GAMMA CHAIN"/>
    <property type="match status" value="1"/>
</dbReference>
<dbReference type="PANTHER" id="PTHR11693:SF22">
    <property type="entry name" value="ATP SYNTHASE SUBUNIT GAMMA, MITOCHONDRIAL"/>
    <property type="match status" value="1"/>
</dbReference>
<dbReference type="Pfam" id="PF00231">
    <property type="entry name" value="ATP-synt"/>
    <property type="match status" value="1"/>
</dbReference>
<dbReference type="PRINTS" id="PR00126">
    <property type="entry name" value="ATPASEGAMMA"/>
</dbReference>
<dbReference type="SUPFAM" id="SSF52943">
    <property type="entry name" value="ATP synthase (F1-ATPase), gamma subunit"/>
    <property type="match status" value="1"/>
</dbReference>
<evidence type="ECO:0000255" key="1">
    <source>
        <dbReference type="HAMAP-Rule" id="MF_00815"/>
    </source>
</evidence>
<sequence>MKSLKELSLRIKNIRSVQKTTKIMQMVSAAKLLQSQKKLSNSKLYISKLHSIISSLMLSVDQELLAKILNVSNNGSYLVFIVASDRGLCGNFNSSIVKFSQNKLITNGKKVDIVFLGKKAFDIGKNRFDSKSILKIENSKGITLKHVEALVGGIDLSKYDKVKVFYSKFYNTFTQKPMLETIKPWSKDSSLIDNSLAGPITDYGYEYEPQNIEFILKSLVQDYVVIALYSALLESATSENSARMVAMESANRNTKEILNKLALLYNRSRQAAITTDLIEVIGGAESL</sequence>
<keyword id="KW-0066">ATP synthesis</keyword>
<keyword id="KW-1003">Cell membrane</keyword>
<keyword id="KW-0139">CF(1)</keyword>
<keyword id="KW-0375">Hydrogen ion transport</keyword>
<keyword id="KW-0406">Ion transport</keyword>
<keyword id="KW-0472">Membrane</keyword>
<keyword id="KW-0813">Transport</keyword>
<accession>C0R4Q0</accession>
<feature type="chain" id="PRO_1000148647" description="ATP synthase gamma chain">
    <location>
        <begin position="1"/>
        <end position="287"/>
    </location>
</feature>
<organism>
    <name type="scientific">Wolbachia sp. subsp. Drosophila simulans (strain wRi)</name>
    <dbReference type="NCBI Taxonomy" id="66084"/>
    <lineage>
        <taxon>Bacteria</taxon>
        <taxon>Pseudomonadati</taxon>
        <taxon>Pseudomonadota</taxon>
        <taxon>Alphaproteobacteria</taxon>
        <taxon>Rickettsiales</taxon>
        <taxon>Anaplasmataceae</taxon>
        <taxon>Wolbachieae</taxon>
        <taxon>Wolbachia</taxon>
    </lineage>
</organism>
<proteinExistence type="inferred from homology"/>
<name>ATPG_WOLWR</name>
<comment type="function">
    <text evidence="1">Produces ATP from ADP in the presence of a proton gradient across the membrane. The gamma chain is believed to be important in regulating ATPase activity and the flow of protons through the CF(0) complex.</text>
</comment>
<comment type="subunit">
    <text evidence="1">F-type ATPases have 2 components, CF(1) - the catalytic core - and CF(0) - the membrane proton channel. CF(1) has five subunits: alpha(3), beta(3), gamma(1), delta(1), epsilon(1). CF(0) has three main subunits: a, b and c.</text>
</comment>
<comment type="subcellular location">
    <subcellularLocation>
        <location evidence="1">Cell membrane</location>
        <topology evidence="1">Peripheral membrane protein</topology>
    </subcellularLocation>
</comment>
<comment type="similarity">
    <text evidence="1">Belongs to the ATPase gamma chain family.</text>
</comment>
<protein>
    <recommendedName>
        <fullName evidence="1">ATP synthase gamma chain</fullName>
    </recommendedName>
    <alternativeName>
        <fullName evidence="1">ATP synthase F1 sector gamma subunit</fullName>
    </alternativeName>
    <alternativeName>
        <fullName evidence="1">F-ATPase gamma subunit</fullName>
    </alternativeName>
</protein>
<reference key="1">
    <citation type="journal article" date="2009" name="Proc. Natl. Acad. Sci. U.S.A.">
        <title>The mosaic genome structure of the Wolbachia wRi strain infecting Drosophila simulans.</title>
        <authorList>
            <person name="Klasson L."/>
            <person name="Westberg J."/>
            <person name="Sapountzis P."/>
            <person name="Naeslund K."/>
            <person name="Lutnaes Y."/>
            <person name="Darby A.C."/>
            <person name="Veneti Z."/>
            <person name="Chen L."/>
            <person name="Braig H.R."/>
            <person name="Garrett R."/>
            <person name="Bourtzis K."/>
            <person name="Andersson S.G."/>
        </authorList>
    </citation>
    <scope>NUCLEOTIDE SEQUENCE [LARGE SCALE GENOMIC DNA]</scope>
    <source>
        <strain>wRi</strain>
    </source>
</reference>